<comment type="function">
    <text evidence="1">Participates actively in the response to hyperosmotic and heat shock by preventing the aggregation of stress-denatured proteins, in association with DnaK and GrpE. It is the nucleotide exchange factor for DnaK and may function as a thermosensor. Unfolded proteins bind initially to DnaJ; upon interaction with the DnaJ-bound protein, DnaK hydrolyzes its bound ATP, resulting in the formation of a stable complex. GrpE releases ADP from DnaK; ATP binding to DnaK triggers the release of the substrate protein, thus completing the reaction cycle. Several rounds of ATP-dependent interactions between DnaJ, DnaK and GrpE are required for fully efficient folding.</text>
</comment>
<comment type="subunit">
    <text evidence="1">Homodimer.</text>
</comment>
<comment type="subcellular location">
    <subcellularLocation>
        <location evidence="1">Cytoplasm</location>
    </subcellularLocation>
</comment>
<comment type="similarity">
    <text evidence="1">Belongs to the GrpE family.</text>
</comment>
<reference key="1">
    <citation type="journal article" date="2005" name="J. Bacteriol.">
        <title>Insights on evolution of virulence and resistance from the complete genome analysis of an early methicillin-resistant Staphylococcus aureus strain and a biofilm-producing methicillin-resistant Staphylococcus epidermidis strain.</title>
        <authorList>
            <person name="Gill S.R."/>
            <person name="Fouts D.E."/>
            <person name="Archer G.L."/>
            <person name="Mongodin E.F."/>
            <person name="DeBoy R.T."/>
            <person name="Ravel J."/>
            <person name="Paulsen I.T."/>
            <person name="Kolonay J.F."/>
            <person name="Brinkac L.M."/>
            <person name="Beanan M.J."/>
            <person name="Dodson R.J."/>
            <person name="Daugherty S.C."/>
            <person name="Madupu R."/>
            <person name="Angiuoli S.V."/>
            <person name="Durkin A.S."/>
            <person name="Haft D.H."/>
            <person name="Vamathevan J.J."/>
            <person name="Khouri H."/>
            <person name="Utterback T.R."/>
            <person name="Lee C."/>
            <person name="Dimitrov G."/>
            <person name="Jiang L."/>
            <person name="Qin H."/>
            <person name="Weidman J."/>
            <person name="Tran K."/>
            <person name="Kang K.H."/>
            <person name="Hance I.R."/>
            <person name="Nelson K.E."/>
            <person name="Fraser C.M."/>
        </authorList>
    </citation>
    <scope>NUCLEOTIDE SEQUENCE [LARGE SCALE GENOMIC DNA]</scope>
    <source>
        <strain>COL</strain>
    </source>
</reference>
<name>GRPE_STAAC</name>
<organism>
    <name type="scientific">Staphylococcus aureus (strain COL)</name>
    <dbReference type="NCBI Taxonomy" id="93062"/>
    <lineage>
        <taxon>Bacteria</taxon>
        <taxon>Bacillati</taxon>
        <taxon>Bacillota</taxon>
        <taxon>Bacilli</taxon>
        <taxon>Bacillales</taxon>
        <taxon>Staphylococcaceae</taxon>
        <taxon>Staphylococcus</taxon>
    </lineage>
</organism>
<sequence length="208" mass="24007">MTNKDESVKKNTESTVEETNVKQNIDDSVEQAEESKGHLQDEAIEETSDENVIEEIDPKDQKINELQQLADENEEKYLRLYAEFENYKRRIQKENEINKTYQAQRVLTDILPAIDNIERALQIEGDDETFKSLQKGVQMVHESLINALKDNGLEVIKTEGEAFDPNIHQAVVQDDNPDFESGEITQELQKGYKLKDRVLRPSMVKVNQ</sequence>
<evidence type="ECO:0000255" key="1">
    <source>
        <dbReference type="HAMAP-Rule" id="MF_01151"/>
    </source>
</evidence>
<evidence type="ECO:0000256" key="2">
    <source>
        <dbReference type="SAM" id="MobiDB-lite"/>
    </source>
</evidence>
<gene>
    <name evidence="1" type="primary">grpE</name>
    <name type="ordered locus">SACOL1638</name>
</gene>
<feature type="chain" id="PRO_0000113854" description="Protein GrpE">
    <location>
        <begin position="1"/>
        <end position="208"/>
    </location>
</feature>
<feature type="region of interest" description="Disordered" evidence="2">
    <location>
        <begin position="1"/>
        <end position="51"/>
    </location>
</feature>
<feature type="compositionally biased region" description="Basic and acidic residues" evidence="2">
    <location>
        <begin position="1"/>
        <end position="12"/>
    </location>
</feature>
<feature type="compositionally biased region" description="Polar residues" evidence="2">
    <location>
        <begin position="13"/>
        <end position="23"/>
    </location>
</feature>
<feature type="compositionally biased region" description="Acidic residues" evidence="2">
    <location>
        <begin position="42"/>
        <end position="51"/>
    </location>
</feature>
<dbReference type="EMBL" id="CP000046">
    <property type="protein sequence ID" value="AAW38254.1"/>
    <property type="molecule type" value="Genomic_DNA"/>
</dbReference>
<dbReference type="RefSeq" id="WP_000182226.1">
    <property type="nucleotide sequence ID" value="NC_002951.2"/>
</dbReference>
<dbReference type="SMR" id="Q5HFH9"/>
<dbReference type="KEGG" id="sac:SACOL1638"/>
<dbReference type="HOGENOM" id="CLU_057217_6_3_9"/>
<dbReference type="Proteomes" id="UP000000530">
    <property type="component" value="Chromosome"/>
</dbReference>
<dbReference type="GO" id="GO:0005737">
    <property type="term" value="C:cytoplasm"/>
    <property type="evidence" value="ECO:0007669"/>
    <property type="project" value="UniProtKB-SubCell"/>
</dbReference>
<dbReference type="GO" id="GO:0000774">
    <property type="term" value="F:adenyl-nucleotide exchange factor activity"/>
    <property type="evidence" value="ECO:0007669"/>
    <property type="project" value="InterPro"/>
</dbReference>
<dbReference type="GO" id="GO:0042803">
    <property type="term" value="F:protein homodimerization activity"/>
    <property type="evidence" value="ECO:0007669"/>
    <property type="project" value="InterPro"/>
</dbReference>
<dbReference type="GO" id="GO:0051087">
    <property type="term" value="F:protein-folding chaperone binding"/>
    <property type="evidence" value="ECO:0007669"/>
    <property type="project" value="InterPro"/>
</dbReference>
<dbReference type="GO" id="GO:0051082">
    <property type="term" value="F:unfolded protein binding"/>
    <property type="evidence" value="ECO:0007669"/>
    <property type="project" value="TreeGrafter"/>
</dbReference>
<dbReference type="GO" id="GO:0006457">
    <property type="term" value="P:protein folding"/>
    <property type="evidence" value="ECO:0007669"/>
    <property type="project" value="InterPro"/>
</dbReference>
<dbReference type="CDD" id="cd00446">
    <property type="entry name" value="GrpE"/>
    <property type="match status" value="1"/>
</dbReference>
<dbReference type="FunFam" id="2.30.22.10:FF:000001">
    <property type="entry name" value="Protein GrpE"/>
    <property type="match status" value="1"/>
</dbReference>
<dbReference type="FunFam" id="3.90.20.20:FF:000002">
    <property type="entry name" value="Protein GrpE"/>
    <property type="match status" value="1"/>
</dbReference>
<dbReference type="Gene3D" id="3.90.20.20">
    <property type="match status" value="1"/>
</dbReference>
<dbReference type="Gene3D" id="2.30.22.10">
    <property type="entry name" value="Head domain of nucleotide exchange factor GrpE"/>
    <property type="match status" value="1"/>
</dbReference>
<dbReference type="HAMAP" id="MF_01151">
    <property type="entry name" value="GrpE"/>
    <property type="match status" value="1"/>
</dbReference>
<dbReference type="InterPro" id="IPR000740">
    <property type="entry name" value="GrpE"/>
</dbReference>
<dbReference type="InterPro" id="IPR013805">
    <property type="entry name" value="GrpE_coiled_coil"/>
</dbReference>
<dbReference type="InterPro" id="IPR009012">
    <property type="entry name" value="GrpE_head"/>
</dbReference>
<dbReference type="NCBIfam" id="NF010738">
    <property type="entry name" value="PRK14140.1"/>
    <property type="match status" value="1"/>
</dbReference>
<dbReference type="PANTHER" id="PTHR21237">
    <property type="entry name" value="GRPE PROTEIN"/>
    <property type="match status" value="1"/>
</dbReference>
<dbReference type="PANTHER" id="PTHR21237:SF23">
    <property type="entry name" value="GRPE PROTEIN HOMOLOG, MITOCHONDRIAL"/>
    <property type="match status" value="1"/>
</dbReference>
<dbReference type="Pfam" id="PF01025">
    <property type="entry name" value="GrpE"/>
    <property type="match status" value="1"/>
</dbReference>
<dbReference type="PRINTS" id="PR00773">
    <property type="entry name" value="GRPEPROTEIN"/>
</dbReference>
<dbReference type="SUPFAM" id="SSF58014">
    <property type="entry name" value="Coiled-coil domain of nucleotide exchange factor GrpE"/>
    <property type="match status" value="1"/>
</dbReference>
<dbReference type="SUPFAM" id="SSF51064">
    <property type="entry name" value="Head domain of nucleotide exchange factor GrpE"/>
    <property type="match status" value="1"/>
</dbReference>
<dbReference type="PROSITE" id="PS01071">
    <property type="entry name" value="GRPE"/>
    <property type="match status" value="1"/>
</dbReference>
<accession>Q5HFH9</accession>
<keyword id="KW-0143">Chaperone</keyword>
<keyword id="KW-0963">Cytoplasm</keyword>
<keyword id="KW-0346">Stress response</keyword>
<proteinExistence type="inferred from homology"/>
<protein>
    <recommendedName>
        <fullName evidence="1">Protein GrpE</fullName>
    </recommendedName>
    <alternativeName>
        <fullName evidence="1">HSP-70 cofactor</fullName>
    </alternativeName>
</protein>